<dbReference type="EC" id="2.1.2.1" evidence="1"/>
<dbReference type="EMBL" id="U23955">
    <property type="protein sequence ID" value="AAC43458.1"/>
    <property type="molecule type" value="Genomic_DNA"/>
</dbReference>
<dbReference type="SMR" id="P50434"/>
<dbReference type="UniPathway" id="UPA00193"/>
<dbReference type="UniPathway" id="UPA00288">
    <property type="reaction ID" value="UER01023"/>
</dbReference>
<dbReference type="GO" id="GO:0005829">
    <property type="term" value="C:cytosol"/>
    <property type="evidence" value="ECO:0007669"/>
    <property type="project" value="TreeGrafter"/>
</dbReference>
<dbReference type="GO" id="GO:0004372">
    <property type="term" value="F:glycine hydroxymethyltransferase activity"/>
    <property type="evidence" value="ECO:0007669"/>
    <property type="project" value="UniProtKB-EC"/>
</dbReference>
<dbReference type="GO" id="GO:0030170">
    <property type="term" value="F:pyridoxal phosphate binding"/>
    <property type="evidence" value="ECO:0007669"/>
    <property type="project" value="InterPro"/>
</dbReference>
<dbReference type="GO" id="GO:0019264">
    <property type="term" value="P:glycine biosynthetic process from serine"/>
    <property type="evidence" value="ECO:0007669"/>
    <property type="project" value="TreeGrafter"/>
</dbReference>
<dbReference type="GO" id="GO:0035999">
    <property type="term" value="P:tetrahydrofolate interconversion"/>
    <property type="evidence" value="ECO:0007669"/>
    <property type="project" value="UniProtKB-UniPathway"/>
</dbReference>
<dbReference type="Gene3D" id="3.90.1150.10">
    <property type="entry name" value="Aspartate Aminotransferase, domain 1"/>
    <property type="match status" value="1"/>
</dbReference>
<dbReference type="Gene3D" id="3.40.640.10">
    <property type="entry name" value="Type I PLP-dependent aspartate aminotransferase-like (Major domain)"/>
    <property type="match status" value="1"/>
</dbReference>
<dbReference type="InterPro" id="IPR015424">
    <property type="entry name" value="PyrdxlP-dep_Trfase"/>
</dbReference>
<dbReference type="InterPro" id="IPR015421">
    <property type="entry name" value="PyrdxlP-dep_Trfase_major"/>
</dbReference>
<dbReference type="InterPro" id="IPR015422">
    <property type="entry name" value="PyrdxlP-dep_Trfase_small"/>
</dbReference>
<dbReference type="InterPro" id="IPR049943">
    <property type="entry name" value="Ser_HO-MeTrfase-like"/>
</dbReference>
<dbReference type="InterPro" id="IPR019798">
    <property type="entry name" value="Ser_HO-MeTrfase_PLP_BS"/>
</dbReference>
<dbReference type="InterPro" id="IPR039429">
    <property type="entry name" value="SHMT-like_dom"/>
</dbReference>
<dbReference type="PANTHER" id="PTHR11680">
    <property type="entry name" value="SERINE HYDROXYMETHYLTRANSFERASE"/>
    <property type="match status" value="1"/>
</dbReference>
<dbReference type="PANTHER" id="PTHR11680:SF35">
    <property type="entry name" value="SERINE HYDROXYMETHYLTRANSFERASE 1"/>
    <property type="match status" value="1"/>
</dbReference>
<dbReference type="Pfam" id="PF00464">
    <property type="entry name" value="SHMT"/>
    <property type="match status" value="1"/>
</dbReference>
<dbReference type="SUPFAM" id="SSF53383">
    <property type="entry name" value="PLP-dependent transferases"/>
    <property type="match status" value="1"/>
</dbReference>
<dbReference type="PROSITE" id="PS00096">
    <property type="entry name" value="SHMT"/>
    <property type="match status" value="1"/>
</dbReference>
<protein>
    <recommendedName>
        <fullName evidence="1">Serine hydroxymethyltransferase</fullName>
        <shortName evidence="1">SHMT</shortName>
        <shortName evidence="1">Serine methylase</shortName>
        <ecNumber evidence="1">2.1.2.1</ecNumber>
    </recommendedName>
</protein>
<feature type="chain" id="PRO_0000113568" description="Serine hydroxymethyltransferase">
    <location>
        <begin position="1" status="less than"/>
        <end position="260"/>
    </location>
</feature>
<feature type="site" description="Plays an important role in substrate specificity" evidence="1">
    <location>
        <position position="59"/>
    </location>
</feature>
<feature type="modified residue" description="N6-(pyridoxal phosphate)lysine" evidence="1">
    <location>
        <position position="60"/>
    </location>
</feature>
<feature type="non-terminal residue">
    <location>
        <position position="1"/>
    </location>
</feature>
<accession>P50434</accession>
<proteinExistence type="inferred from homology"/>
<evidence type="ECO:0000255" key="1">
    <source>
        <dbReference type="HAMAP-Rule" id="MF_00051"/>
    </source>
</evidence>
<evidence type="ECO:0000305" key="2"/>
<keyword id="KW-0028">Amino-acid biosynthesis</keyword>
<keyword id="KW-0963">Cytoplasm</keyword>
<keyword id="KW-0554">One-carbon metabolism</keyword>
<keyword id="KW-0663">Pyridoxal phosphate</keyword>
<keyword id="KW-0808">Transferase</keyword>
<comment type="function">
    <text evidence="1">Catalyzes the reversible interconversion of serine and glycine with tetrahydrofolate (THF) serving as the one-carbon carrier. This reaction serves as the major source of one-carbon groups required for the biosynthesis of purines, thymidylate, methionine, and other important biomolecules. Also exhibits THF-independent aldolase activity toward beta-hydroxyamino acids, producing glycine and aldehydes, via a retro-aldol mechanism.</text>
</comment>
<comment type="catalytic activity">
    <reaction evidence="1">
        <text>(6R)-5,10-methylene-5,6,7,8-tetrahydrofolate + glycine + H2O = (6S)-5,6,7,8-tetrahydrofolate + L-serine</text>
        <dbReference type="Rhea" id="RHEA:15481"/>
        <dbReference type="ChEBI" id="CHEBI:15377"/>
        <dbReference type="ChEBI" id="CHEBI:15636"/>
        <dbReference type="ChEBI" id="CHEBI:33384"/>
        <dbReference type="ChEBI" id="CHEBI:57305"/>
        <dbReference type="ChEBI" id="CHEBI:57453"/>
        <dbReference type="EC" id="2.1.2.1"/>
    </reaction>
</comment>
<comment type="cofactor">
    <cofactor evidence="1">
        <name>pyridoxal 5'-phosphate</name>
        <dbReference type="ChEBI" id="CHEBI:597326"/>
    </cofactor>
</comment>
<comment type="pathway">
    <text evidence="1">One-carbon metabolism; tetrahydrofolate interconversion.</text>
</comment>
<comment type="pathway">
    <text evidence="1">Amino-acid biosynthesis; glycine biosynthesis; glycine from L-serine: step 1/1.</text>
</comment>
<comment type="subunit">
    <text evidence="1">Homodimer.</text>
</comment>
<comment type="subcellular location">
    <subcellularLocation>
        <location evidence="1">Cytoplasm</location>
    </subcellularLocation>
</comment>
<comment type="similarity">
    <text evidence="1 2">Belongs to the SHMT family.</text>
</comment>
<gene>
    <name evidence="1" type="primary">glyA</name>
</gene>
<organism>
    <name type="scientific">Corynebacterium sp. (strain P-1)</name>
    <dbReference type="NCBI Taxonomy" id="69006"/>
    <lineage>
        <taxon>Bacteria</taxon>
        <taxon>Bacillati</taxon>
        <taxon>Actinomycetota</taxon>
        <taxon>Actinomycetes</taxon>
        <taxon>Mycobacteriales</taxon>
        <taxon>Corynebacteriaceae</taxon>
        <taxon>Corynebacterium</taxon>
    </lineage>
</organism>
<reference key="1">
    <citation type="journal article" date="1995" name="J. Biol. Chem.">
        <title>Sequence analysis of sarcosine oxidase and nearby genes reveals homologies with key enzymes of folate one-carbon metabolism.</title>
        <authorList>
            <person name="Chlumsky L.J."/>
            <person name="Zhang L."/>
            <person name="Jorns M.S."/>
        </authorList>
    </citation>
    <scope>NUCLEOTIDE SEQUENCE [GENOMIC DNA]</scope>
</reference>
<sequence>IVAGWSAYPRQLDFVRFREIADKVGAYLFVDMAHFAGLVATGLHPSPVPHAHVVTSTTHKTLAGPRGGIILSNDAEIAKKLNSAVFPGQQGGPLEHVIAGKAVAFKIAASAEFKERQQRTLAGSRILAQRLTQADVAAKGISVLTGGTDVHLVLVDLRHSELDGQQAEDLLAKVEITVNRNSVPFDPRPPMTTSGLRIGTPALATRGFSEEAFAEVAEIIAQTLIAGAEGNTGVLPELKARILELAAAHPLYPNLKKIGE</sequence>
<name>GLYA_CORS1</name>